<gene>
    <name evidence="10" type="primary">Camsap2</name>
    <name type="synonym">Camsap1l1</name>
    <name evidence="8" type="synonym">Kiaa1078</name>
</gene>
<feature type="chain" id="PRO_0000316833" description="Calmodulin-regulated spectrin-associated protein 2">
    <location>
        <begin position="1"/>
        <end position="1461"/>
    </location>
</feature>
<feature type="domain" description="Calponin-homology (CH)" evidence="3">
    <location>
        <begin position="211"/>
        <end position="324"/>
    </location>
</feature>
<feature type="domain" description="CKK" evidence="4">
    <location>
        <begin position="1321"/>
        <end position="1455"/>
    </location>
</feature>
<feature type="region of interest" description="Disordered" evidence="5">
    <location>
        <begin position="361"/>
        <end position="389"/>
    </location>
</feature>
<feature type="region of interest" description="Disordered" evidence="5">
    <location>
        <begin position="573"/>
        <end position="613"/>
    </location>
</feature>
<feature type="region of interest" description="Disordered" evidence="5">
    <location>
        <begin position="639"/>
        <end position="704"/>
    </location>
</feature>
<feature type="region of interest" description="Disordered" evidence="5">
    <location>
        <begin position="787"/>
        <end position="855"/>
    </location>
</feature>
<feature type="region of interest" description="MBD region" evidence="1">
    <location>
        <begin position="896"/>
        <end position="1007"/>
    </location>
</feature>
<feature type="region of interest" description="Disordered" evidence="5">
    <location>
        <begin position="921"/>
        <end position="992"/>
    </location>
</feature>
<feature type="region of interest" description="Disordered" evidence="5">
    <location>
        <begin position="1004"/>
        <end position="1044"/>
    </location>
</feature>
<feature type="region of interest" description="Disordered" evidence="5">
    <location>
        <begin position="1069"/>
        <end position="1090"/>
    </location>
</feature>
<feature type="region of interest" description="Disordered" evidence="5">
    <location>
        <begin position="1102"/>
        <end position="1124"/>
    </location>
</feature>
<feature type="region of interest" description="Disordered" evidence="5">
    <location>
        <begin position="1163"/>
        <end position="1321"/>
    </location>
</feature>
<feature type="coiled-coil region" evidence="2">
    <location>
        <begin position="730"/>
        <end position="767"/>
    </location>
</feature>
<feature type="coiled-coil region" evidence="2">
    <location>
        <begin position="861"/>
        <end position="900"/>
    </location>
</feature>
<feature type="coiled-coil region" evidence="2">
    <location>
        <begin position="1138"/>
        <end position="1210"/>
    </location>
</feature>
<feature type="compositionally biased region" description="Low complexity" evidence="5">
    <location>
        <begin position="362"/>
        <end position="371"/>
    </location>
</feature>
<feature type="compositionally biased region" description="Low complexity" evidence="5">
    <location>
        <begin position="380"/>
        <end position="389"/>
    </location>
</feature>
<feature type="compositionally biased region" description="Low complexity" evidence="5">
    <location>
        <begin position="654"/>
        <end position="673"/>
    </location>
</feature>
<feature type="compositionally biased region" description="Basic and acidic residues" evidence="5">
    <location>
        <begin position="677"/>
        <end position="687"/>
    </location>
</feature>
<feature type="compositionally biased region" description="Basic and acidic residues" evidence="5">
    <location>
        <begin position="787"/>
        <end position="826"/>
    </location>
</feature>
<feature type="compositionally biased region" description="Low complexity" evidence="5">
    <location>
        <begin position="926"/>
        <end position="937"/>
    </location>
</feature>
<feature type="compositionally biased region" description="Polar residues" evidence="5">
    <location>
        <begin position="943"/>
        <end position="962"/>
    </location>
</feature>
<feature type="compositionally biased region" description="Basic and acidic residues" evidence="5">
    <location>
        <begin position="1011"/>
        <end position="1028"/>
    </location>
</feature>
<feature type="compositionally biased region" description="Pro residues" evidence="5">
    <location>
        <begin position="1077"/>
        <end position="1089"/>
    </location>
</feature>
<feature type="compositionally biased region" description="Basic and acidic residues" evidence="5">
    <location>
        <begin position="1104"/>
        <end position="1124"/>
    </location>
</feature>
<feature type="compositionally biased region" description="Basic and acidic residues" evidence="5">
    <location>
        <begin position="1163"/>
        <end position="1224"/>
    </location>
</feature>
<feature type="compositionally biased region" description="Polar residues" evidence="5">
    <location>
        <begin position="1259"/>
        <end position="1271"/>
    </location>
</feature>
<feature type="compositionally biased region" description="Polar residues" evidence="5">
    <location>
        <begin position="1306"/>
        <end position="1318"/>
    </location>
</feature>
<feature type="modified residue" description="Phosphoserine" evidence="11">
    <location>
        <position position="391"/>
    </location>
</feature>
<feature type="modified residue" description="Phosphoserine" evidence="11">
    <location>
        <position position="393"/>
    </location>
</feature>
<feature type="modified residue" description="Phosphothreonine" evidence="11">
    <location>
        <position position="401"/>
    </location>
</feature>
<feature type="modified residue" description="Phosphoserine" evidence="11">
    <location>
        <position position="439"/>
    </location>
</feature>
<feature type="modified residue" description="Phosphoserine" evidence="1">
    <location>
        <position position="572"/>
    </location>
</feature>
<feature type="modified residue" description="Phosphoserine" evidence="11">
    <location>
        <position position="573"/>
    </location>
</feature>
<feature type="modified residue" description="Phosphoserine" evidence="11">
    <location>
        <position position="585"/>
    </location>
</feature>
<feature type="modified residue" description="Phosphoserine" evidence="1">
    <location>
        <position position="647"/>
    </location>
</feature>
<feature type="modified residue" description="Phosphothreonine" evidence="11">
    <location>
        <position position="652"/>
    </location>
</feature>
<feature type="modified residue" description="Phosphoserine" evidence="11">
    <location>
        <position position="654"/>
    </location>
</feature>
<feature type="modified residue" description="Phosphoserine" evidence="11">
    <location>
        <position position="836"/>
    </location>
</feature>
<feature type="modified residue" description="Phosphoserine" evidence="1">
    <location>
        <position position="905"/>
    </location>
</feature>
<feature type="modified residue" description="Phosphoserine" evidence="1">
    <location>
        <position position="910"/>
    </location>
</feature>
<feature type="modified residue" description="Phosphothreonine" evidence="1">
    <location>
        <position position="970"/>
    </location>
</feature>
<feature type="modified residue" description="Phosphothreonine" evidence="1">
    <location>
        <position position="975"/>
    </location>
</feature>
<feature type="modified residue" description="Phosphothreonine" evidence="1">
    <location>
        <position position="977"/>
    </location>
</feature>
<feature type="modified residue" description="Phosphoserine" evidence="1">
    <location>
        <position position="981"/>
    </location>
</feature>
<feature type="modified residue" description="Phosphoserine" evidence="1">
    <location>
        <position position="992"/>
    </location>
</feature>
<feature type="modified residue" description="Phosphoserine" evidence="11">
    <location>
        <position position="1120"/>
    </location>
</feature>
<feature type="modified residue" description="Phosphoserine" evidence="11">
    <location>
        <position position="1285"/>
    </location>
</feature>
<feature type="modified residue" description="Phosphoserine" evidence="11">
    <location>
        <position position="1291"/>
    </location>
</feature>
<feature type="modified residue" description="Phosphoserine" evidence="11">
    <location>
        <position position="1293"/>
    </location>
</feature>
<feature type="splice variant" id="VSP_030807" description="In isoform 2." evidence="8">
    <original>P</original>
    <variation>PGSRISRVFS</variation>
    <location>
        <position position="1257"/>
    </location>
</feature>
<feature type="sequence conflict" description="In Ref. 1; AAI45259." evidence="9" ref="1">
    <original>A</original>
    <variation>T</variation>
    <location>
        <position position="30"/>
    </location>
</feature>
<feature type="sequence conflict" description="In Ref. 1; AAI45259." evidence="9" ref="1">
    <original>R</original>
    <variation>Q</variation>
    <location>
        <position position="802"/>
    </location>
</feature>
<reference key="1">
    <citation type="journal article" date="2004" name="Genome Res.">
        <title>The status, quality, and expansion of the NIH full-length cDNA project: the Mammalian Gene Collection (MGC).</title>
        <authorList>
            <consortium name="The MGC Project Team"/>
        </authorList>
    </citation>
    <scope>NUCLEOTIDE SEQUENCE [LARGE SCALE MRNA] (ISOFORM 1)</scope>
    <source>
        <tissue>Brain</tissue>
    </source>
</reference>
<reference key="2">
    <citation type="journal article" date="2005" name="Science">
        <title>The transcriptional landscape of the mammalian genome.</title>
        <authorList>
            <person name="Carninci P."/>
            <person name="Kasukawa T."/>
            <person name="Katayama S."/>
            <person name="Gough J."/>
            <person name="Frith M.C."/>
            <person name="Maeda N."/>
            <person name="Oyama R."/>
            <person name="Ravasi T."/>
            <person name="Lenhard B."/>
            <person name="Wells C."/>
            <person name="Kodzius R."/>
            <person name="Shimokawa K."/>
            <person name="Bajic V.B."/>
            <person name="Brenner S.E."/>
            <person name="Batalov S."/>
            <person name="Forrest A.R."/>
            <person name="Zavolan M."/>
            <person name="Davis M.J."/>
            <person name="Wilming L.G."/>
            <person name="Aidinis V."/>
            <person name="Allen J.E."/>
            <person name="Ambesi-Impiombato A."/>
            <person name="Apweiler R."/>
            <person name="Aturaliya R.N."/>
            <person name="Bailey T.L."/>
            <person name="Bansal M."/>
            <person name="Baxter L."/>
            <person name="Beisel K.W."/>
            <person name="Bersano T."/>
            <person name="Bono H."/>
            <person name="Chalk A.M."/>
            <person name="Chiu K.P."/>
            <person name="Choudhary V."/>
            <person name="Christoffels A."/>
            <person name="Clutterbuck D.R."/>
            <person name="Crowe M.L."/>
            <person name="Dalla E."/>
            <person name="Dalrymple B.P."/>
            <person name="de Bono B."/>
            <person name="Della Gatta G."/>
            <person name="di Bernardo D."/>
            <person name="Down T."/>
            <person name="Engstrom P."/>
            <person name="Fagiolini M."/>
            <person name="Faulkner G."/>
            <person name="Fletcher C.F."/>
            <person name="Fukushima T."/>
            <person name="Furuno M."/>
            <person name="Futaki S."/>
            <person name="Gariboldi M."/>
            <person name="Georgii-Hemming P."/>
            <person name="Gingeras T.R."/>
            <person name="Gojobori T."/>
            <person name="Green R.E."/>
            <person name="Gustincich S."/>
            <person name="Harbers M."/>
            <person name="Hayashi Y."/>
            <person name="Hensch T.K."/>
            <person name="Hirokawa N."/>
            <person name="Hill D."/>
            <person name="Huminiecki L."/>
            <person name="Iacono M."/>
            <person name="Ikeo K."/>
            <person name="Iwama A."/>
            <person name="Ishikawa T."/>
            <person name="Jakt M."/>
            <person name="Kanapin A."/>
            <person name="Katoh M."/>
            <person name="Kawasawa Y."/>
            <person name="Kelso J."/>
            <person name="Kitamura H."/>
            <person name="Kitano H."/>
            <person name="Kollias G."/>
            <person name="Krishnan S.P."/>
            <person name="Kruger A."/>
            <person name="Kummerfeld S.K."/>
            <person name="Kurochkin I.V."/>
            <person name="Lareau L.F."/>
            <person name="Lazarevic D."/>
            <person name="Lipovich L."/>
            <person name="Liu J."/>
            <person name="Liuni S."/>
            <person name="McWilliam S."/>
            <person name="Madan Babu M."/>
            <person name="Madera M."/>
            <person name="Marchionni L."/>
            <person name="Matsuda H."/>
            <person name="Matsuzawa S."/>
            <person name="Miki H."/>
            <person name="Mignone F."/>
            <person name="Miyake S."/>
            <person name="Morris K."/>
            <person name="Mottagui-Tabar S."/>
            <person name="Mulder N."/>
            <person name="Nakano N."/>
            <person name="Nakauchi H."/>
            <person name="Ng P."/>
            <person name="Nilsson R."/>
            <person name="Nishiguchi S."/>
            <person name="Nishikawa S."/>
            <person name="Nori F."/>
            <person name="Ohara O."/>
            <person name="Okazaki Y."/>
            <person name="Orlando V."/>
            <person name="Pang K.C."/>
            <person name="Pavan W.J."/>
            <person name="Pavesi G."/>
            <person name="Pesole G."/>
            <person name="Petrovsky N."/>
            <person name="Piazza S."/>
            <person name="Reed J."/>
            <person name="Reid J.F."/>
            <person name="Ring B.Z."/>
            <person name="Ringwald M."/>
            <person name="Rost B."/>
            <person name="Ruan Y."/>
            <person name="Salzberg S.L."/>
            <person name="Sandelin A."/>
            <person name="Schneider C."/>
            <person name="Schoenbach C."/>
            <person name="Sekiguchi K."/>
            <person name="Semple C.A."/>
            <person name="Seno S."/>
            <person name="Sessa L."/>
            <person name="Sheng Y."/>
            <person name="Shibata Y."/>
            <person name="Shimada H."/>
            <person name="Shimada K."/>
            <person name="Silva D."/>
            <person name="Sinclair B."/>
            <person name="Sperling S."/>
            <person name="Stupka E."/>
            <person name="Sugiura K."/>
            <person name="Sultana R."/>
            <person name="Takenaka Y."/>
            <person name="Taki K."/>
            <person name="Tammoja K."/>
            <person name="Tan S.L."/>
            <person name="Tang S."/>
            <person name="Taylor M.S."/>
            <person name="Tegner J."/>
            <person name="Teichmann S.A."/>
            <person name="Ueda H.R."/>
            <person name="van Nimwegen E."/>
            <person name="Verardo R."/>
            <person name="Wei C.L."/>
            <person name="Yagi K."/>
            <person name="Yamanishi H."/>
            <person name="Zabarovsky E."/>
            <person name="Zhu S."/>
            <person name="Zimmer A."/>
            <person name="Hide W."/>
            <person name="Bult C."/>
            <person name="Grimmond S.M."/>
            <person name="Teasdale R.D."/>
            <person name="Liu E.T."/>
            <person name="Brusic V."/>
            <person name="Quackenbush J."/>
            <person name="Wahlestedt C."/>
            <person name="Mattick J.S."/>
            <person name="Hume D.A."/>
            <person name="Kai C."/>
            <person name="Sasaki D."/>
            <person name="Tomaru Y."/>
            <person name="Fukuda S."/>
            <person name="Kanamori-Katayama M."/>
            <person name="Suzuki M."/>
            <person name="Aoki J."/>
            <person name="Arakawa T."/>
            <person name="Iida J."/>
            <person name="Imamura K."/>
            <person name="Itoh M."/>
            <person name="Kato T."/>
            <person name="Kawaji H."/>
            <person name="Kawagashira N."/>
            <person name="Kawashima T."/>
            <person name="Kojima M."/>
            <person name="Kondo S."/>
            <person name="Konno H."/>
            <person name="Nakano K."/>
            <person name="Ninomiya N."/>
            <person name="Nishio T."/>
            <person name="Okada M."/>
            <person name="Plessy C."/>
            <person name="Shibata K."/>
            <person name="Shiraki T."/>
            <person name="Suzuki S."/>
            <person name="Tagami M."/>
            <person name="Waki K."/>
            <person name="Watahiki A."/>
            <person name="Okamura-Oho Y."/>
            <person name="Suzuki H."/>
            <person name="Kawai J."/>
            <person name="Hayashizaki Y."/>
        </authorList>
    </citation>
    <scope>NUCLEOTIDE SEQUENCE [LARGE SCALE MRNA] OF 1-1185 (ISOFORMS 1/2)</scope>
    <scope>NUCLEOTIDE SEQUENCE [LARGE SCALE MRNA] OF 1223-1461 (ISOFORM 1)</scope>
    <source>
        <strain>C57BL/6J</strain>
        <tissue>Head</tissue>
        <tissue>Skin</tissue>
    </source>
</reference>
<reference key="3">
    <citation type="journal article" date="2003" name="DNA Res.">
        <title>Prediction of the coding sequences of mouse homologues of KIAA gene: II. The complete nucleotide sequences of 400 mouse KIAA-homologous cDNAs identified by screening of terminal sequences of cDNA clones randomly sampled from size-fractionated libraries.</title>
        <authorList>
            <person name="Okazaki N."/>
            <person name="Kikuno R."/>
            <person name="Ohara R."/>
            <person name="Inamoto S."/>
            <person name="Aizawa H."/>
            <person name="Yuasa S."/>
            <person name="Nakajima D."/>
            <person name="Nagase T."/>
            <person name="Ohara O."/>
            <person name="Koga H."/>
        </authorList>
    </citation>
    <scope>NUCLEOTIDE SEQUENCE [LARGE SCALE MRNA] OF 658-1461 (ISOFORM 2)</scope>
    <source>
        <tissue>Brain</tissue>
    </source>
</reference>
<reference key="4">
    <citation type="journal article" date="2004" name="Mol. Cell. Proteomics">
        <title>Phosphoproteomic analysis of the developing mouse brain.</title>
        <authorList>
            <person name="Ballif B.A."/>
            <person name="Villen J."/>
            <person name="Beausoleil S.A."/>
            <person name="Schwartz D."/>
            <person name="Gygi S.P."/>
        </authorList>
    </citation>
    <scope>IDENTIFICATION BY MASS SPECTROMETRY [LARGE SCALE ANALYSIS]</scope>
    <source>
        <tissue>Embryonic brain</tissue>
    </source>
</reference>
<reference key="5">
    <citation type="journal article" date="2006" name="Mol. Cell. Proteomics">
        <title>Comprehensive identification of phosphorylation sites in postsynaptic density preparations.</title>
        <authorList>
            <person name="Trinidad J.C."/>
            <person name="Specht C.G."/>
            <person name="Thalhammer A."/>
            <person name="Schoepfer R."/>
            <person name="Burlingame A.L."/>
        </authorList>
    </citation>
    <scope>IDENTIFICATION BY MASS SPECTROMETRY [LARGE SCALE ANALYSIS]</scope>
    <source>
        <tissue>Brain</tissue>
    </source>
</reference>
<reference key="6">
    <citation type="journal article" date="2010" name="Cell">
        <title>A tissue-specific atlas of mouse protein phosphorylation and expression.</title>
        <authorList>
            <person name="Huttlin E.L."/>
            <person name="Jedrychowski M.P."/>
            <person name="Elias J.E."/>
            <person name="Goswami T."/>
            <person name="Rad R."/>
            <person name="Beausoleil S.A."/>
            <person name="Villen J."/>
            <person name="Haas W."/>
            <person name="Sowa M.E."/>
            <person name="Gygi S.P."/>
        </authorList>
    </citation>
    <scope>PHOSPHORYLATION [LARGE SCALE ANALYSIS] AT SER-391; SER-393; THR-401; SER-439; SER-573; SER-585; THR-652; SER-654; SER-836; SER-1120; SER-1285; SER-1291 AND SER-1293</scope>
    <scope>IDENTIFICATION BY MASS SPECTROMETRY [LARGE SCALE ANALYSIS]</scope>
    <source>
        <tissue>Brain</tissue>
        <tissue>Brown adipose tissue</tissue>
        <tissue>Kidney</tissue>
        <tissue>Lung</tissue>
        <tissue>Spleen</tissue>
        <tissue>Testis</tissue>
    </source>
</reference>
<reference key="7">
    <citation type="journal article" date="2012" name="Proc. Natl. Acad. Sci. U.S.A.">
        <title>Nezha/CAMSAP3 and CAMSAP2 cooperate in epithelial-specific organization of noncentrosomal microtubules.</title>
        <authorList>
            <person name="Tanaka N."/>
            <person name="Meng W."/>
            <person name="Nagae S."/>
            <person name="Takeichi M."/>
        </authorList>
    </citation>
    <scope>FUNCTION</scope>
    <scope>INTERACTION WITH CAMSAP3</scope>
</reference>
<reference key="8">
    <citation type="journal article" date="2020" name="Proc. Natl. Acad. Sci. U.S.A.">
        <title>CAMSAP3 facilitates basal body polarity and the formation of the central pair of microtubules in motile cilia.</title>
        <authorList>
            <person name="Robinson A.M."/>
            <person name="Takahashi S."/>
            <person name="Brotslaw E.J."/>
            <person name="Ahmad A."/>
            <person name="Ferrer E."/>
            <person name="Procissi D."/>
            <person name="Richter C.P."/>
            <person name="Cheatham M.A."/>
            <person name="Mitchell B.J."/>
            <person name="Zheng J."/>
        </authorList>
    </citation>
    <scope>SUBCELLULAR LOCATION</scope>
</reference>
<sequence length="1461" mass="164333">MGDAADPREMRRTFIVPAIKPFDHYDFSRAKIACNLAWLVAKAFGTENVPEELGDPFYTDQYDQEHIKPPVVNLLLSAELYCRAGSLILKSDAAKPLLGHDAVIQALAQKGLYVTDQEKLVTERDLHKKPIQMSAHLAMIDTLMMAYTVEMISIEKVIACAQQYSAFFQATDLPYDIEDAVMYWMNKVNEHLKDIMEQEQKSKEHHPAEAPGGQKARYRKEQTLLKQLPCIPLVENLLKDGTDGCALAALIHFYCPAVVRLEDICLKETMSLADSLYNLQLIQEFCQEYLNHCCHFSLEDMLYAASSIKSNYLVFMAELFWWFEVVKPSFVQPRVVRPQGAEPAKDVPSVPVLNAAKRNIRDSSSSSDFSSRYTRPQTHSSASGGIRRSSSMSYVDGFIGTWPKEKRTSVHGVSFDISFDKEDSAQSSTPNRGIIRSVSNEGLTLNNSRASKHIRKNLSFKPVNGEEEESIEEELHVDPHGDLQSPMPLNTNELNSNESTHYKLPNGALQNRVLLDEFGNQIETPSIEEALQIIHDTERPPHTPRPDQIANGFFLHGQDLSILNSNIKLNQSSPDNLTDTKGALSPITDTTEVDTGIHVPSEDIPETMDEDSSLRDYTVSLDSDMDDASKLLQDYDLRASNPREALSPCPSTISTKSQPGSSASSSSGVKMTSFAEQKFRKLNHTDGKSSGSSSQKTTPEGSELNIPHVVSWAQIPEEAGVAPGRDTTQLLASEMVHLRMRLEEKRRAIEAQKKKMEAAFTKQRQKMGRTAFLTVVKKKGEGISPLREEAAGAEDEKVYTDRAKERESQKMDGQRSKSLADIKESMETPPGRWLKSPTTPVDPERQWNLTSPSEETLNEGEILEYTKSIEKLNSSLHFLQQEMQRLSLQQEMLMQMREQQAWVISPPQPSPQKQIRDFKPRQAGLSSAAAPFSSDSPRPTHPSPQSSTRKSASFSVKNQRTPRPNELKITPLNRTLTPPRSVDSLPRLRRFSPSQVPIQTRSFVCFGDDGEPQKEPKQKEEIKKEPSECKGTLGPCDHNPGEKEIKPVESTVSEVLSQPITETVCVTPNEDQLSQPTEPPPKPVFPPTAPKNVNLIEVSLSDLKPPEKADVSVEKLDGESDKEQFDDDQKVCCGFFFKDDQKAENDMAMKRAALLEKRLRREKETQLRKQQLEAEMEHKKEETRRKTEEERQKKEDERARREFIRQEYMRRKQLKLMEDMDTVIKPRPQAAKQKKQRPKSIHRDHIESPKTPIKGPPVSSLSLASLNTGDSESVHSGKRTPRSESVEGFLSPSRCGSRNGEKDWENASTTSSVASGTEYTGPKLYKEPSAKSNKHIIQNALAHCCLAGKVNEGQKKKILEEMEKSDANNFLILFRDSGCQFRSLYTYCPETEEINKLTGIGPKSITKKMIEGLYKYNSDRKQFSHIPAKTLSASVDAITIHSHLWQTKRPVTPKKLLPTKA</sequence>
<evidence type="ECO:0000250" key="1">
    <source>
        <dbReference type="UniProtKB" id="Q08AD1"/>
    </source>
</evidence>
<evidence type="ECO:0000255" key="2"/>
<evidence type="ECO:0000255" key="3">
    <source>
        <dbReference type="PROSITE-ProRule" id="PRU00044"/>
    </source>
</evidence>
<evidence type="ECO:0000255" key="4">
    <source>
        <dbReference type="PROSITE-ProRule" id="PRU00841"/>
    </source>
</evidence>
<evidence type="ECO:0000256" key="5">
    <source>
        <dbReference type="SAM" id="MobiDB-lite"/>
    </source>
</evidence>
<evidence type="ECO:0000269" key="6">
    <source>
    </source>
</evidence>
<evidence type="ECO:0000269" key="7">
    <source>
    </source>
</evidence>
<evidence type="ECO:0000303" key="8">
    <source>
    </source>
</evidence>
<evidence type="ECO:0000305" key="9"/>
<evidence type="ECO:0000312" key="10">
    <source>
        <dbReference type="MGI" id="MGI:1922434"/>
    </source>
</evidence>
<evidence type="ECO:0007744" key="11">
    <source>
    </source>
</evidence>
<comment type="function">
    <text evidence="1">Key microtubule-organizing protein that specifically binds the minus-end of non-centrosomal microtubules and regulates their dynamics and organization (PubMed:23169647). Specifically recognizes growing microtubule minus-ends and autonomously decorates and stabilizes microtubule lattice formed by microtubule minus-end polymerization (By similarity). Acts on free microtubule minus-ends that are not capped by microtubule-nucleating proteins or other factors and protects microtubule minus-ends from depolymerization (By similarity). In addition, it also reduces the velocity of microtubule polymerization (By similarity). Through the microtubule cytoskeleton, also regulates the organization of cellular organelles including the Golgi and the early endosomes (By similarity). Essential for the tethering, but not for nucleation of non-centrosomal microtubules at the Golgi: together with Golgi-associated proteins AKAP9 and PDE4DIP, required to tether non-centrosomal minus-end microtubules to the Golgi, an important step for polarized cell movement (By similarity). Also acts as a regulator of neuronal polarity and development: localizes to non-centrosomal microtubule minus-ends in neurons and stabilizes non-centrosomal microtubules, which is required for neuronal polarity, axon specification and dendritic branch formation (By similarity). Through the microtubule cytoskeleton, regulates the autophagosome transport (By similarity).</text>
</comment>
<comment type="subunit">
    <text evidence="1 6">Interacts with CAMSAP3 (PubMed:23169647). Interacts with KATNA1 and KATNB1; leading to regulate the length of CAMSAP2-decorated microtubule stretches (By similarity). Interacts with a complex formed by AKAP9 and PDE4DIP isoform 2/MMG8/SMYLE, which recruits CAMSAP2 to the Golgi (By similarity). Interacts with MAPRE1/EB1 (By similarity).</text>
</comment>
<comment type="interaction">
    <interactant intactId="EBI-8839434">
        <id>Q8C1B1</id>
    </interactant>
    <interactant intactId="EBI-2125556">
        <id>Q80VC9</id>
        <label>Camsap3</label>
    </interactant>
    <organismsDiffer>false</organismsDiffer>
    <experiments>2</experiments>
</comment>
<comment type="subcellular location">
    <subcellularLocation>
        <location evidence="1">Cytoplasm</location>
        <location evidence="1">Cytoskeleton</location>
    </subcellularLocation>
    <subcellularLocation>
        <location evidence="1">Golgi apparatus</location>
    </subcellularLocation>
    <subcellularLocation>
        <location evidence="7">Cytoplasm</location>
    </subcellularLocation>
    <subcellularLocation>
        <location evidence="7">Cytoplasm</location>
        <location evidence="7">Cytoskeleton</location>
        <location evidence="7">Cilium basal body</location>
    </subcellularLocation>
    <text evidence="1">Associated with the minus-end of microtubules and also detected at the centrosomes. Decorates the minus-end of microtubules by decreasing the rate of tubulin incorporation and remaining bound. The length of CAMSAP2-decorated stretches on the minus-end of microtubules is dependent on MAPRE1/EB1 and MAPRE3/EB3, which promote elongation of CAMSAP2-decorated microtubule stretches. Recruited to the Golgi apparatus by AKAP9 and PDE4DIP isoform 2/MMG8/SMYLE. In neurons, localizes to the minus-end of microtubules in axon and dendrites.</text>
</comment>
<comment type="alternative products">
    <event type="alternative splicing"/>
    <isoform>
        <id>Q8C1B1-1</id>
        <name>1</name>
        <sequence type="displayed"/>
    </isoform>
    <isoform>
        <id>Q8C1B1-2</id>
        <name>2</name>
        <sequence type="described" ref="VSP_030807"/>
    </isoform>
</comment>
<comment type="domain">
    <text evidence="1 4">The CKK domain binds microtubules and specifically recognizes the minus-end of microtubules.</text>
</comment>
<comment type="domain">
    <text evidence="1">The MBD (microtubule-binding domain) region can recognize some features of the microtubule lattice, which might contribute to the specific decoration of growing microtubule minus-ends by CAMSAP2.</text>
</comment>
<comment type="similarity">
    <text evidence="4">Belongs to the CAMSAP1 family.</text>
</comment>
<organism>
    <name type="scientific">Mus musculus</name>
    <name type="common">Mouse</name>
    <dbReference type="NCBI Taxonomy" id="10090"/>
    <lineage>
        <taxon>Eukaryota</taxon>
        <taxon>Metazoa</taxon>
        <taxon>Chordata</taxon>
        <taxon>Craniata</taxon>
        <taxon>Vertebrata</taxon>
        <taxon>Euteleostomi</taxon>
        <taxon>Mammalia</taxon>
        <taxon>Eutheria</taxon>
        <taxon>Euarchontoglires</taxon>
        <taxon>Glires</taxon>
        <taxon>Rodentia</taxon>
        <taxon>Myomorpha</taxon>
        <taxon>Muroidea</taxon>
        <taxon>Muridae</taxon>
        <taxon>Murinae</taxon>
        <taxon>Mus</taxon>
        <taxon>Mus</taxon>
    </lineage>
</organism>
<dbReference type="EMBL" id="BC145258">
    <property type="protein sequence ID" value="AAI45259.1"/>
    <property type="molecule type" value="mRNA"/>
</dbReference>
<dbReference type="EMBL" id="AK028542">
    <property type="protein sequence ID" value="BAC25999.2"/>
    <property type="molecule type" value="mRNA"/>
</dbReference>
<dbReference type="EMBL" id="AK081975">
    <property type="protein sequence ID" value="BAC38384.1"/>
    <property type="molecule type" value="mRNA"/>
</dbReference>
<dbReference type="EMBL" id="AK122436">
    <property type="protein sequence ID" value="BAC65718.1"/>
    <property type="molecule type" value="mRNA"/>
</dbReference>
<dbReference type="CCDS" id="CCDS83597.1">
    <molecule id="Q8C1B1-1"/>
</dbReference>
<dbReference type="RefSeq" id="NP_001334039.1">
    <molecule id="Q8C1B1-1"/>
    <property type="nucleotide sequence ID" value="NM_001347110.1"/>
</dbReference>
<dbReference type="RefSeq" id="XP_006529897.1">
    <molecule id="Q8C1B1-2"/>
    <property type="nucleotide sequence ID" value="XM_006529834.4"/>
</dbReference>
<dbReference type="SMR" id="Q8C1B1"/>
<dbReference type="BioGRID" id="212510">
    <property type="interactions" value="11"/>
</dbReference>
<dbReference type="DIP" id="DIP-60092N"/>
<dbReference type="FunCoup" id="Q8C1B1">
    <property type="interactions" value="2965"/>
</dbReference>
<dbReference type="IntAct" id="Q8C1B1">
    <property type="interactions" value="3"/>
</dbReference>
<dbReference type="STRING" id="10090.ENSMUSP00000142299"/>
<dbReference type="iPTMnet" id="Q8C1B1"/>
<dbReference type="PhosphoSitePlus" id="Q8C1B1"/>
<dbReference type="SwissPalm" id="Q8C1B1"/>
<dbReference type="jPOST" id="Q8C1B1"/>
<dbReference type="PaxDb" id="10090-ENSMUSP00000041920"/>
<dbReference type="PeptideAtlas" id="Q8C1B1"/>
<dbReference type="ProteomicsDB" id="265519">
    <molecule id="Q8C1B1-1"/>
</dbReference>
<dbReference type="ProteomicsDB" id="265520">
    <molecule id="Q8C1B1-2"/>
</dbReference>
<dbReference type="Pumba" id="Q8C1B1"/>
<dbReference type="Antibodypedia" id="20635">
    <property type="antibodies" value="79 antibodies from 19 providers"/>
</dbReference>
<dbReference type="Ensembl" id="ENSMUST00000192001.6">
    <molecule id="Q8C1B1-1"/>
    <property type="protein sequence ID" value="ENSMUSP00000142166.2"/>
    <property type="gene ID" value="ENSMUSG00000041570.15"/>
</dbReference>
<dbReference type="GeneID" id="67886"/>
<dbReference type="KEGG" id="mmu:67886"/>
<dbReference type="UCSC" id="uc007cur.2">
    <molecule id="Q8C1B1-1"/>
    <property type="organism name" value="mouse"/>
</dbReference>
<dbReference type="UCSC" id="uc011wsz.1">
    <molecule id="Q8C1B1-2"/>
    <property type="organism name" value="mouse"/>
</dbReference>
<dbReference type="AGR" id="MGI:1922434"/>
<dbReference type="CTD" id="23271"/>
<dbReference type="MGI" id="MGI:1922434">
    <property type="gene designation" value="Camsap2"/>
</dbReference>
<dbReference type="VEuPathDB" id="HostDB:ENSMUSG00000041570"/>
<dbReference type="eggNOG" id="KOG3654">
    <property type="taxonomic scope" value="Eukaryota"/>
</dbReference>
<dbReference type="GeneTree" id="ENSGT00950000182975"/>
<dbReference type="InParanoid" id="Q8C1B1"/>
<dbReference type="PhylomeDB" id="Q8C1B1"/>
<dbReference type="BioGRID-ORCS" id="67886">
    <property type="hits" value="2 hits in 77 CRISPR screens"/>
</dbReference>
<dbReference type="CD-CODE" id="763F4AA2">
    <property type="entry name" value="In vitro porcine tubulin Condensate"/>
</dbReference>
<dbReference type="ChiTaRS" id="Camsap2">
    <property type="organism name" value="mouse"/>
</dbReference>
<dbReference type="PRO" id="PR:Q8C1B1"/>
<dbReference type="Proteomes" id="UP000000589">
    <property type="component" value="Chromosome 1"/>
</dbReference>
<dbReference type="RNAct" id="Q8C1B1">
    <property type="molecule type" value="protein"/>
</dbReference>
<dbReference type="Bgee" id="ENSMUSG00000041570">
    <property type="expression patterns" value="Expressed in otolith organ and 230 other cell types or tissues"/>
</dbReference>
<dbReference type="ExpressionAtlas" id="Q8C1B1">
    <property type="expression patterns" value="baseline and differential"/>
</dbReference>
<dbReference type="GO" id="GO:0036064">
    <property type="term" value="C:ciliary basal body"/>
    <property type="evidence" value="ECO:0000314"/>
    <property type="project" value="UniProtKB"/>
</dbReference>
<dbReference type="GO" id="GO:0005794">
    <property type="term" value="C:Golgi apparatus"/>
    <property type="evidence" value="ECO:0007669"/>
    <property type="project" value="UniProtKB-SubCell"/>
</dbReference>
<dbReference type="GO" id="GO:0015630">
    <property type="term" value="C:microtubule cytoskeleton"/>
    <property type="evidence" value="ECO:0000314"/>
    <property type="project" value="MGI"/>
</dbReference>
<dbReference type="GO" id="GO:0036449">
    <property type="term" value="C:microtubule minus-end"/>
    <property type="evidence" value="ECO:0000314"/>
    <property type="project" value="UniProtKB"/>
</dbReference>
<dbReference type="GO" id="GO:0005516">
    <property type="term" value="F:calmodulin binding"/>
    <property type="evidence" value="ECO:0007669"/>
    <property type="project" value="InterPro"/>
</dbReference>
<dbReference type="GO" id="GO:0051011">
    <property type="term" value="F:microtubule minus-end binding"/>
    <property type="evidence" value="ECO:0000314"/>
    <property type="project" value="MGI"/>
</dbReference>
<dbReference type="GO" id="GO:0030507">
    <property type="term" value="F:spectrin binding"/>
    <property type="evidence" value="ECO:0007669"/>
    <property type="project" value="InterPro"/>
</dbReference>
<dbReference type="GO" id="GO:0061564">
    <property type="term" value="P:axon development"/>
    <property type="evidence" value="ECO:0000250"/>
    <property type="project" value="UniProtKB"/>
</dbReference>
<dbReference type="GO" id="GO:0000226">
    <property type="term" value="P:microtubule cytoskeleton organization"/>
    <property type="evidence" value="ECO:0000250"/>
    <property type="project" value="UniProtKB"/>
</dbReference>
<dbReference type="GO" id="GO:0050773">
    <property type="term" value="P:regulation of dendrite development"/>
    <property type="evidence" value="ECO:0000250"/>
    <property type="project" value="UniProtKB"/>
</dbReference>
<dbReference type="GO" id="GO:1903358">
    <property type="term" value="P:regulation of Golgi organization"/>
    <property type="evidence" value="ECO:0000250"/>
    <property type="project" value="UniProtKB"/>
</dbReference>
<dbReference type="GO" id="GO:0031113">
    <property type="term" value="P:regulation of microtubule polymerization"/>
    <property type="evidence" value="ECO:0000250"/>
    <property type="project" value="UniProtKB"/>
</dbReference>
<dbReference type="GO" id="GO:0033043">
    <property type="term" value="P:regulation of organelle organization"/>
    <property type="evidence" value="ECO:0000316"/>
    <property type="project" value="UniProtKB"/>
</dbReference>
<dbReference type="FunFam" id="3.10.20.360:FF:000001">
    <property type="entry name" value="Calmodulin-regulated spectrin-associated protein 3 isoform 2"/>
    <property type="match status" value="1"/>
</dbReference>
<dbReference type="Gene3D" id="3.10.20.360">
    <property type="entry name" value="CKK domain"/>
    <property type="match status" value="1"/>
</dbReference>
<dbReference type="InterPro" id="IPR032940">
    <property type="entry name" value="CAMSAP"/>
</dbReference>
<dbReference type="InterPro" id="IPR022613">
    <property type="entry name" value="CAMSAP-like_CH_dom"/>
</dbReference>
<dbReference type="InterPro" id="IPR031372">
    <property type="entry name" value="CAMSAP_CC1"/>
</dbReference>
<dbReference type="InterPro" id="IPR001715">
    <property type="entry name" value="CH_dom"/>
</dbReference>
<dbReference type="InterPro" id="IPR036872">
    <property type="entry name" value="CH_dom_sf"/>
</dbReference>
<dbReference type="InterPro" id="IPR038209">
    <property type="entry name" value="CKK_dom_sf"/>
</dbReference>
<dbReference type="InterPro" id="IPR014797">
    <property type="entry name" value="CKK_domain"/>
</dbReference>
<dbReference type="InterPro" id="IPR011033">
    <property type="entry name" value="PRC_barrel-like_sf"/>
</dbReference>
<dbReference type="PANTHER" id="PTHR21595:SF1">
    <property type="entry name" value="CALMODULIN-REGULATED SPECTRIN-ASSOCIATED PROTEIN 2"/>
    <property type="match status" value="1"/>
</dbReference>
<dbReference type="PANTHER" id="PTHR21595">
    <property type="entry name" value="PATRONIN"/>
    <property type="match status" value="1"/>
</dbReference>
<dbReference type="Pfam" id="PF17095">
    <property type="entry name" value="CAMSAP_CC1"/>
    <property type="match status" value="1"/>
</dbReference>
<dbReference type="Pfam" id="PF11971">
    <property type="entry name" value="CAMSAP_CH"/>
    <property type="match status" value="1"/>
</dbReference>
<dbReference type="Pfam" id="PF08683">
    <property type="entry name" value="CAMSAP_CKK"/>
    <property type="match status" value="1"/>
</dbReference>
<dbReference type="SMART" id="SM01051">
    <property type="entry name" value="CAMSAP_CKK"/>
    <property type="match status" value="1"/>
</dbReference>
<dbReference type="SUPFAM" id="SSF47576">
    <property type="entry name" value="Calponin-homology domain, CH-domain"/>
    <property type="match status" value="1"/>
</dbReference>
<dbReference type="SUPFAM" id="SSF50346">
    <property type="entry name" value="PRC-barrel domain"/>
    <property type="match status" value="1"/>
</dbReference>
<dbReference type="PROSITE" id="PS50021">
    <property type="entry name" value="CH"/>
    <property type="match status" value="1"/>
</dbReference>
<dbReference type="PROSITE" id="PS51508">
    <property type="entry name" value="CKK"/>
    <property type="match status" value="1"/>
</dbReference>
<name>CAMP2_MOUSE</name>
<accession>Q8C1B1</accession>
<accession>B7ZNI4</accession>
<accession>Q80TK8</accession>
<accession>Q8C4J5</accession>
<keyword id="KW-0025">Alternative splicing</keyword>
<keyword id="KW-0966">Cell projection</keyword>
<keyword id="KW-0175">Coiled coil</keyword>
<keyword id="KW-0963">Cytoplasm</keyword>
<keyword id="KW-0206">Cytoskeleton</keyword>
<keyword id="KW-0333">Golgi apparatus</keyword>
<keyword id="KW-0493">Microtubule</keyword>
<keyword id="KW-0597">Phosphoprotein</keyword>
<keyword id="KW-1185">Reference proteome</keyword>
<protein>
    <recommendedName>
        <fullName evidence="9">Calmodulin-regulated spectrin-associated protein 2</fullName>
    </recommendedName>
    <alternativeName>
        <fullName>Calmodulin-regulated spectrin-associated protein 1-like protein 1</fullName>
    </alternativeName>
</protein>
<proteinExistence type="evidence at protein level"/>